<accession>Q9NRA0</accession>
<accession>A0T4C8</accession>
<accession>B4DU87</accession>
<accession>Q9BRN1</accession>
<accession>Q9H0Q2</accession>
<accession>Q9NWU7</accession>
<gene>
    <name evidence="25" type="primary">SPHK2</name>
    <name type="synonym">SK2</name>
</gene>
<reference key="1">
    <citation type="journal article" date="2000" name="J. Biol. Chem.">
        <title>Molecular cloning and functional characterization of a novel mammalian sphingosine kinase type 2 isoform.</title>
        <authorList>
            <person name="Liu H."/>
            <person name="Sugiura M."/>
            <person name="Nava V.E."/>
            <person name="Edsall L.C."/>
            <person name="Kono K."/>
            <person name="Poulton S."/>
            <person name="Milstien S."/>
            <person name="Kohama T."/>
            <person name="Spiegel S."/>
        </authorList>
    </citation>
    <scope>NUCLEOTIDE SEQUENCE [MRNA] (ISOFORM 2)</scope>
    <scope>CATALYTIC ACTIVITY</scope>
    <scope>SUBSTRATE SPECIFICITY</scope>
    <scope>TISSUE SPECIFICITY</scope>
</reference>
<reference key="2">
    <citation type="submission" date="2006-11" db="EMBL/GenBank/DDBJ databases">
        <title>Variant of human sphingosine kinase-2 (SPHK2).</title>
        <authorList>
            <person name="Alemany R."/>
            <person name="Ruemenapp U."/>
            <person name="van Koppen C.J."/>
            <person name="Danneberg K."/>
            <person name="Meyer zu Heringdorf D."/>
            <person name="Jakobs K.H."/>
        </authorList>
    </citation>
    <scope>NUCLEOTIDE SEQUENCE [MRNA] (ISOFORM 5)</scope>
</reference>
<reference key="3">
    <citation type="journal article" date="2001" name="Genome Res.">
        <title>Towards a catalog of human genes and proteins: sequencing and analysis of 500 novel complete protein coding human cDNAs.</title>
        <authorList>
            <person name="Wiemann S."/>
            <person name="Weil B."/>
            <person name="Wellenreuther R."/>
            <person name="Gassenhuber J."/>
            <person name="Glassl S."/>
            <person name="Ansorge W."/>
            <person name="Boecher M."/>
            <person name="Bloecker H."/>
            <person name="Bauersachs S."/>
            <person name="Blum H."/>
            <person name="Lauber J."/>
            <person name="Duesterhoeft A."/>
            <person name="Beyer A."/>
            <person name="Koehrer K."/>
            <person name="Strack N."/>
            <person name="Mewes H.-W."/>
            <person name="Ottenwaelder B."/>
            <person name="Obermaier B."/>
            <person name="Tampe J."/>
            <person name="Heubner D."/>
            <person name="Wambutt R."/>
            <person name="Korn B."/>
            <person name="Klein M."/>
            <person name="Poustka A."/>
        </authorList>
    </citation>
    <scope>NUCLEOTIDE SEQUENCE [LARGE SCALE MRNA] (ISOFORM 2)</scope>
    <source>
        <tissue>Brain</tissue>
    </source>
</reference>
<reference key="4">
    <citation type="journal article" date="2004" name="Nat. Genet.">
        <title>Complete sequencing and characterization of 21,243 full-length human cDNAs.</title>
        <authorList>
            <person name="Ota T."/>
            <person name="Suzuki Y."/>
            <person name="Nishikawa T."/>
            <person name="Otsuki T."/>
            <person name="Sugiyama T."/>
            <person name="Irie R."/>
            <person name="Wakamatsu A."/>
            <person name="Hayashi K."/>
            <person name="Sato H."/>
            <person name="Nagai K."/>
            <person name="Kimura K."/>
            <person name="Makita H."/>
            <person name="Sekine M."/>
            <person name="Obayashi M."/>
            <person name="Nishi T."/>
            <person name="Shibahara T."/>
            <person name="Tanaka T."/>
            <person name="Ishii S."/>
            <person name="Yamamoto J."/>
            <person name="Saito K."/>
            <person name="Kawai Y."/>
            <person name="Isono Y."/>
            <person name="Nakamura Y."/>
            <person name="Nagahari K."/>
            <person name="Murakami K."/>
            <person name="Yasuda T."/>
            <person name="Iwayanagi T."/>
            <person name="Wagatsuma M."/>
            <person name="Shiratori A."/>
            <person name="Sudo H."/>
            <person name="Hosoiri T."/>
            <person name="Kaku Y."/>
            <person name="Kodaira H."/>
            <person name="Kondo H."/>
            <person name="Sugawara M."/>
            <person name="Takahashi M."/>
            <person name="Kanda K."/>
            <person name="Yokoi T."/>
            <person name="Furuya T."/>
            <person name="Kikkawa E."/>
            <person name="Omura Y."/>
            <person name="Abe K."/>
            <person name="Kamihara K."/>
            <person name="Katsuta N."/>
            <person name="Sato K."/>
            <person name="Tanikawa M."/>
            <person name="Yamazaki M."/>
            <person name="Ninomiya K."/>
            <person name="Ishibashi T."/>
            <person name="Yamashita H."/>
            <person name="Murakawa K."/>
            <person name="Fujimori K."/>
            <person name="Tanai H."/>
            <person name="Kimata M."/>
            <person name="Watanabe M."/>
            <person name="Hiraoka S."/>
            <person name="Chiba Y."/>
            <person name="Ishida S."/>
            <person name="Ono Y."/>
            <person name="Takiguchi S."/>
            <person name="Watanabe S."/>
            <person name="Yosida M."/>
            <person name="Hotuta T."/>
            <person name="Kusano J."/>
            <person name="Kanehori K."/>
            <person name="Takahashi-Fujii A."/>
            <person name="Hara H."/>
            <person name="Tanase T.-O."/>
            <person name="Nomura Y."/>
            <person name="Togiya S."/>
            <person name="Komai F."/>
            <person name="Hara R."/>
            <person name="Takeuchi K."/>
            <person name="Arita M."/>
            <person name="Imose N."/>
            <person name="Musashino K."/>
            <person name="Yuuki H."/>
            <person name="Oshima A."/>
            <person name="Sasaki N."/>
            <person name="Aotsuka S."/>
            <person name="Yoshikawa Y."/>
            <person name="Matsunawa H."/>
            <person name="Ichihara T."/>
            <person name="Shiohata N."/>
            <person name="Sano S."/>
            <person name="Moriya S."/>
            <person name="Momiyama H."/>
            <person name="Satoh N."/>
            <person name="Takami S."/>
            <person name="Terashima Y."/>
            <person name="Suzuki O."/>
            <person name="Nakagawa S."/>
            <person name="Senoh A."/>
            <person name="Mizoguchi H."/>
            <person name="Goto Y."/>
            <person name="Shimizu F."/>
            <person name="Wakebe H."/>
            <person name="Hishigaki H."/>
            <person name="Watanabe T."/>
            <person name="Sugiyama A."/>
            <person name="Takemoto M."/>
            <person name="Kawakami B."/>
            <person name="Yamazaki M."/>
            <person name="Watanabe K."/>
            <person name="Kumagai A."/>
            <person name="Itakura S."/>
            <person name="Fukuzumi Y."/>
            <person name="Fujimori Y."/>
            <person name="Komiyama M."/>
            <person name="Tashiro H."/>
            <person name="Tanigami A."/>
            <person name="Fujiwara T."/>
            <person name="Ono T."/>
            <person name="Yamada K."/>
            <person name="Fujii Y."/>
            <person name="Ozaki K."/>
            <person name="Hirao M."/>
            <person name="Ohmori Y."/>
            <person name="Kawabata A."/>
            <person name="Hikiji T."/>
            <person name="Kobatake N."/>
            <person name="Inagaki H."/>
            <person name="Ikema Y."/>
            <person name="Okamoto S."/>
            <person name="Okitani R."/>
            <person name="Kawakami T."/>
            <person name="Noguchi S."/>
            <person name="Itoh T."/>
            <person name="Shigeta K."/>
            <person name="Senba T."/>
            <person name="Matsumura K."/>
            <person name="Nakajima Y."/>
            <person name="Mizuno T."/>
            <person name="Morinaga M."/>
            <person name="Sasaki M."/>
            <person name="Togashi T."/>
            <person name="Oyama M."/>
            <person name="Hata H."/>
            <person name="Watanabe M."/>
            <person name="Komatsu T."/>
            <person name="Mizushima-Sugano J."/>
            <person name="Satoh T."/>
            <person name="Shirai Y."/>
            <person name="Takahashi Y."/>
            <person name="Nakagawa K."/>
            <person name="Okumura K."/>
            <person name="Nagase T."/>
            <person name="Nomura N."/>
            <person name="Kikuchi H."/>
            <person name="Masuho Y."/>
            <person name="Yamashita R."/>
            <person name="Nakai K."/>
            <person name="Yada T."/>
            <person name="Nakamura Y."/>
            <person name="Ohara O."/>
            <person name="Isogai T."/>
            <person name="Sugano S."/>
        </authorList>
    </citation>
    <scope>NUCLEOTIDE SEQUENCE [LARGE SCALE MRNA] (ISOFORM 4)</scope>
    <scope>NUCLEOTIDE SEQUENCE [LARGE SCALE MRNA] OF 1-354 (ISOFORM 3)</scope>
    <source>
        <tissue>Carcinoma</tissue>
        <tissue>Prostate</tissue>
    </source>
</reference>
<reference key="5">
    <citation type="journal article" date="2004" name="Nature">
        <title>The DNA sequence and biology of human chromosome 19.</title>
        <authorList>
            <person name="Grimwood J."/>
            <person name="Gordon L.A."/>
            <person name="Olsen A.S."/>
            <person name="Terry A."/>
            <person name="Schmutz J."/>
            <person name="Lamerdin J.E."/>
            <person name="Hellsten U."/>
            <person name="Goodstein D."/>
            <person name="Couronne O."/>
            <person name="Tran-Gyamfi M."/>
            <person name="Aerts A."/>
            <person name="Altherr M."/>
            <person name="Ashworth L."/>
            <person name="Bajorek E."/>
            <person name="Black S."/>
            <person name="Branscomb E."/>
            <person name="Caenepeel S."/>
            <person name="Carrano A.V."/>
            <person name="Caoile C."/>
            <person name="Chan Y.M."/>
            <person name="Christensen M."/>
            <person name="Cleland C.A."/>
            <person name="Copeland A."/>
            <person name="Dalin E."/>
            <person name="Dehal P."/>
            <person name="Denys M."/>
            <person name="Detter J.C."/>
            <person name="Escobar J."/>
            <person name="Flowers D."/>
            <person name="Fotopulos D."/>
            <person name="Garcia C."/>
            <person name="Georgescu A.M."/>
            <person name="Glavina T."/>
            <person name="Gomez M."/>
            <person name="Gonzales E."/>
            <person name="Groza M."/>
            <person name="Hammon N."/>
            <person name="Hawkins T."/>
            <person name="Haydu L."/>
            <person name="Ho I."/>
            <person name="Huang W."/>
            <person name="Israni S."/>
            <person name="Jett J."/>
            <person name="Kadner K."/>
            <person name="Kimball H."/>
            <person name="Kobayashi A."/>
            <person name="Larionov V."/>
            <person name="Leem S.-H."/>
            <person name="Lopez F."/>
            <person name="Lou Y."/>
            <person name="Lowry S."/>
            <person name="Malfatti S."/>
            <person name="Martinez D."/>
            <person name="McCready P.M."/>
            <person name="Medina C."/>
            <person name="Morgan J."/>
            <person name="Nelson K."/>
            <person name="Nolan M."/>
            <person name="Ovcharenko I."/>
            <person name="Pitluck S."/>
            <person name="Pollard M."/>
            <person name="Popkie A.P."/>
            <person name="Predki P."/>
            <person name="Quan G."/>
            <person name="Ramirez L."/>
            <person name="Rash S."/>
            <person name="Retterer J."/>
            <person name="Rodriguez A."/>
            <person name="Rogers S."/>
            <person name="Salamov A."/>
            <person name="Salazar A."/>
            <person name="She X."/>
            <person name="Smith D."/>
            <person name="Slezak T."/>
            <person name="Solovyev V."/>
            <person name="Thayer N."/>
            <person name="Tice H."/>
            <person name="Tsai M."/>
            <person name="Ustaszewska A."/>
            <person name="Vo N."/>
            <person name="Wagner M."/>
            <person name="Wheeler J."/>
            <person name="Wu K."/>
            <person name="Xie G."/>
            <person name="Yang J."/>
            <person name="Dubchak I."/>
            <person name="Furey T.S."/>
            <person name="DeJong P."/>
            <person name="Dickson M."/>
            <person name="Gordon D."/>
            <person name="Eichler E.E."/>
            <person name="Pennacchio L.A."/>
            <person name="Richardson P."/>
            <person name="Stubbs L."/>
            <person name="Rokhsar D.S."/>
            <person name="Myers R.M."/>
            <person name="Rubin E.M."/>
            <person name="Lucas S.M."/>
        </authorList>
    </citation>
    <scope>NUCLEOTIDE SEQUENCE [LARGE SCALE GENOMIC DNA]</scope>
</reference>
<reference key="6">
    <citation type="journal article" date="2004" name="Genome Res.">
        <title>The status, quality, and expansion of the NIH full-length cDNA project: the Mammalian Gene Collection (MGC).</title>
        <authorList>
            <consortium name="The MGC Project Team"/>
        </authorList>
    </citation>
    <scope>NUCLEOTIDE SEQUENCE [LARGE SCALE MRNA] (ISOFORMS 1 AND 2)</scope>
    <source>
        <tissue>Eye</tissue>
        <tissue>Lymph</tissue>
    </source>
</reference>
<reference key="7">
    <citation type="journal article" date="2003" name="J. Biol. Chem.">
        <title>Sphingosine kinase 2 is a nuclear protein and inhibits DNA synthesis.</title>
        <authorList>
            <person name="Igarashi N."/>
            <person name="Okada T."/>
            <person name="Hayashi S."/>
            <person name="Fujita T."/>
            <person name="Jahangeer S."/>
            <person name="Nakamura S."/>
        </authorList>
    </citation>
    <scope>FUNCTION</scope>
    <scope>CATALYTIC ACTIVITY</scope>
    <scope>SUBCELLULAR LOCATION</scope>
</reference>
<reference key="8">
    <citation type="journal article" date="2005" name="J. Biol. Chem.">
        <title>Involvement of N-terminal-extended form of sphingosine kinase 2 in serum-dependent regulation of cell proliferation and apoptosis.</title>
        <authorList>
            <person name="Okada T."/>
            <person name="Ding G."/>
            <person name="Sonoda H."/>
            <person name="Kajimoto T."/>
            <person name="Haga Y."/>
            <person name="Khosrowbeygi A."/>
            <person name="Gao S."/>
            <person name="Miwa N."/>
            <person name="Jahangeer S."/>
            <person name="Nakamura S."/>
        </authorList>
    </citation>
    <scope>ALTERNATIVE SPLICING</scope>
    <scope>TISSUE SPECIFICITY</scope>
    <scope>SUBCELLULAR LOCATION</scope>
</reference>
<reference key="9">
    <citation type="journal article" date="2005" name="J. Biol. Chem.">
        <title>SphK1 and SphK2, sphingosine kinase isoenzymes with opposing functions in sphingolipid metabolism.</title>
        <authorList>
            <person name="Maceyka M."/>
            <person name="Sankala H."/>
            <person name="Hait N.C."/>
            <person name="Le Stunff H."/>
            <person name="Liu H."/>
            <person name="Toman R."/>
            <person name="Collier C."/>
            <person name="Zhang M."/>
            <person name="Satin L.S."/>
            <person name="Merrill A.H. Jr."/>
            <person name="Milstien S."/>
            <person name="Spiegel S."/>
        </authorList>
    </citation>
    <scope>FUNCTION</scope>
</reference>
<reference key="10">
    <citation type="journal article" date="2007" name="J. Biol. Chem.">
        <title>Sphingosine kinase type 2 activation by ERK-mediated phosphorylation.</title>
        <authorList>
            <person name="Hait N.C."/>
            <person name="Bellamy A."/>
            <person name="Milstien S."/>
            <person name="Kordula T."/>
            <person name="Spiegel S."/>
        </authorList>
    </citation>
    <scope>PHOSPHORYLATION AT SER-387 AND THR-614</scope>
    <scope>MUTAGENESIS OF SER-387; SER-437; SER-466; SER-477 AND THR-614</scope>
    <scope>ACTIVITY REGULATION</scope>
</reference>
<reference key="11">
    <citation type="journal article" date="2007" name="J. Biol. Chem.">
        <title>Protein kinase D-mediated phosphorylation and nuclear export of sphingosine kinase 2.</title>
        <authorList>
            <person name="Ding G."/>
            <person name="Sonoda H."/>
            <person name="Yu H."/>
            <person name="Kajimoto T."/>
            <person name="Goparaju S.K."/>
            <person name="Jahangeer S."/>
            <person name="Okada T."/>
            <person name="Nakamura S."/>
        </authorList>
    </citation>
    <scope>SUBCELLULAR LOCATION</scope>
    <scope>PHOSPHORYLATION AT SER-419 AND SER-421</scope>
    <scope>MUTAGENESIS OF 419-SER--SER-421 AND 423-LEU--LEU-425</scope>
</reference>
<reference key="12">
    <citation type="journal article" date="2007" name="Traffic">
        <title>Integral and associated lysosomal membrane proteins.</title>
        <authorList>
            <person name="Schroeder B."/>
            <person name="Wrocklage C."/>
            <person name="Pan C."/>
            <person name="Jaeger R."/>
            <person name="Koesters B."/>
            <person name="Schaefer H."/>
            <person name="Elsaesser H.-P."/>
            <person name="Mann M."/>
            <person name="Hasilik A."/>
        </authorList>
    </citation>
    <scope>SUBCELLULAR LOCATION [LARGE SCALE ANALYSIS] (ISOFORM 2)</scope>
    <source>
        <tissue>Placenta</tissue>
    </source>
</reference>
<reference key="13">
    <citation type="journal article" date="2008" name="J. Biol. Chem.">
        <title>Eukaryotic elongation factor 1A interacts with sphingosine kinase and directly enhances its catalytic activity.</title>
        <authorList>
            <person name="Leclercq T.M."/>
            <person name="Moretti P.A."/>
            <person name="Vadas M.A."/>
            <person name="Pitson S.M."/>
        </authorList>
    </citation>
    <scope>INTERACTION WITH EEF1A1</scope>
</reference>
<reference key="14">
    <citation type="journal article" date="2008" name="Proc. Natl. Acad. Sci. U.S.A.">
        <title>A quantitative atlas of mitotic phosphorylation.</title>
        <authorList>
            <person name="Dephoure N."/>
            <person name="Zhou C."/>
            <person name="Villen J."/>
            <person name="Beausoleil S.A."/>
            <person name="Bakalarski C.E."/>
            <person name="Elledge S.J."/>
            <person name="Gygi S.P."/>
        </authorList>
    </citation>
    <scope>IDENTIFICATION BY MASS SPECTROMETRY [LARGE SCALE ANALYSIS]</scope>
    <source>
        <tissue>Cervix carcinoma</tissue>
    </source>
</reference>
<reference key="15">
    <citation type="journal article" date="2009" name="Biochem. Biophys. Res. Commun.">
        <title>A lipid binding domain in sphingosine kinase 2.</title>
        <authorList>
            <person name="Don A.S."/>
            <person name="Rosen H."/>
        </authorList>
    </citation>
    <scope>FUNCTION</scope>
    <scope>SUBCELLULAR LOCATION</scope>
    <scope>ACTIVITY REGULATION</scope>
    <scope>REGION</scope>
</reference>
<reference key="16">
    <citation type="journal article" date="2009" name="Science">
        <title>Regulation of histone acetylation in the nucleus by sphingosine-1-phosphate.</title>
        <authorList>
            <person name="Hait N.C."/>
            <person name="Allegood J."/>
            <person name="Maceyka M."/>
            <person name="Strub G.M."/>
            <person name="Harikumar K.B."/>
            <person name="Singh S.K."/>
            <person name="Luo C."/>
            <person name="Marmorstein R."/>
            <person name="Kordula T."/>
            <person name="Milstien S."/>
            <person name="Spiegel S."/>
        </authorList>
    </citation>
    <scope>FUNCTION</scope>
    <scope>SUBCELLULAR LOCATION</scope>
    <scope>INTERACTION WITH HISTONE H3; HDAC1; HDAC2; MBD2 AND SIN3A</scope>
    <scope>MUTAGENESIS OF GLY-212</scope>
    <scope>CATALYTIC ACTIVITY</scope>
</reference>
<reference key="17">
    <citation type="journal article" date="2010" name="Blood">
        <title>Cleavage of sphingosine kinase 2 by caspase-1 provokes its release from apoptotic cells.</title>
        <authorList>
            <person name="Weigert A."/>
            <person name="Cremer S."/>
            <person name="Schmidt M.V."/>
            <person name="von Knethen A."/>
            <person name="Angioni C."/>
            <person name="Geisslinger G."/>
            <person name="Bruene B."/>
        </authorList>
    </citation>
    <scope>SUBCELLULAR LOCATION</scope>
    <scope>CLEAVAGE</scope>
    <scope>MUTAGENESIS OF ASP-138; THR-220 AND ASP-552</scope>
</reference>
<reference key="18">
    <citation type="journal article" date="2011" name="FASEB J.">
        <title>Sphingosine-1-phosphate produced by sphingosine kinase 2 in mitochondria interacts with prohibitin 2 to regulate complex IV assembly and respiration.</title>
        <authorList>
            <person name="Strub G.M."/>
            <person name="Paillard M."/>
            <person name="Liang J."/>
            <person name="Gomez L."/>
            <person name="Allegood J.C."/>
            <person name="Hait N.C."/>
            <person name="Maceyka M."/>
            <person name="Price M.M."/>
            <person name="Chen Q."/>
            <person name="Simpson D.C."/>
            <person name="Kordula T."/>
            <person name="Milstien S."/>
            <person name="Lesnefsky E.J."/>
            <person name="Spiegel S."/>
        </authorList>
    </citation>
    <scope>FUNCTION</scope>
</reference>
<reference key="19">
    <citation type="journal article" date="2013" name="J. Proteome Res.">
        <title>Toward a comprehensive characterization of a human cancer cell phosphoproteome.</title>
        <authorList>
            <person name="Zhou H."/>
            <person name="Di Palma S."/>
            <person name="Preisinger C."/>
            <person name="Peng M."/>
            <person name="Polat A.N."/>
            <person name="Heck A.J."/>
            <person name="Mohammed S."/>
        </authorList>
    </citation>
    <scope>PHOSPHORYLATION [LARGE SCALE ANALYSIS] AT SER-387 AND SER-399</scope>
    <scope>IDENTIFICATION BY MASS SPECTROMETRY [LARGE SCALE ANALYSIS]</scope>
    <source>
        <tissue>Cervix carcinoma</tissue>
        <tissue>Erythroleukemia</tissue>
    </source>
</reference>
<reference key="20">
    <citation type="journal article" date="2014" name="J. Proteomics">
        <title>An enzyme assisted RP-RPLC approach for in-depth analysis of human liver phosphoproteome.</title>
        <authorList>
            <person name="Bian Y."/>
            <person name="Song C."/>
            <person name="Cheng K."/>
            <person name="Dong M."/>
            <person name="Wang F."/>
            <person name="Huang J."/>
            <person name="Sun D."/>
            <person name="Wang L."/>
            <person name="Ye M."/>
            <person name="Zou H."/>
        </authorList>
    </citation>
    <scope>PHOSPHORYLATION [LARGE SCALE ANALYSIS] AT SER-477</scope>
    <scope>IDENTIFICATION BY MASS SPECTROMETRY [LARGE SCALE ANALYSIS]</scope>
    <source>
        <tissue>Liver</tissue>
    </source>
</reference>
<reference key="21">
    <citation type="journal article" date="2018" name="Acta Neuropathol. Commun.">
        <title>Neuronal sphingosine kinase 2 subcellular localization is altered in Alzheimer's disease brain.</title>
        <authorList>
            <person name="Dominguez G."/>
            <person name="Maddelein M.L."/>
            <person name="Pucelle M."/>
            <person name="Nicaise Y."/>
            <person name="Maurage C.A."/>
            <person name="Duyckaerts C."/>
            <person name="Cuvillier O."/>
            <person name="Delisle M.B."/>
        </authorList>
    </citation>
    <scope>TISSUE SPECIFICITY</scope>
    <scope>SUBCELLULAR LOCATION</scope>
</reference>
<proteinExistence type="evidence at protein level"/>
<sequence length="654" mass="69217">MNGHLEAEEQQDQRPDQELTGSWGHGPRSTLVRAKAMAPPPPPLAASTPLLHGEFGSYPARGPRFALTLTSQALHIQRLRPKPEARPRGGLVPLAEVSGCCTLRSRSPSDSAAYFCIYTYPRGRRGARRRATRTFRADGAATYEENRAEAQRWATALTCLLRGLPLPGDGEITPDLLPRPPRLLLLVNPFGGRGLAWQWCKNHVLPMISEAGLSFNLIQTERQNHARELVQGLSLSEWDGIVTVSGDGLLHEVLNGLLDRPDWEEAVKMPVGILPCGSGNALAGAVNQHGGFEPALGLDLLLNCSLLLCRGGGHPLDLLSVTLASGSRCFSFLSVAWGFVSDVDIQSERFRALGSARFTLGTVLGLATLHTYRGRLSYLPATVEPASPTPAHSLPRAKSELTLTPDPAPPMAHSPLHRSVSDLPLPLPQPALASPGSPEPLPILSLNGGGPELAGDWGGAGDAPLSPDPLLSSPPGSPKAALHSPVSEGAPVIPPSSGLPLPTPDARVGASTCGPPDHLLPPLGTPLPPDWVTLEGDFVLMLAISPSHLGADLVAAPHARFDDGLVHLCWVRSGISRAALLRLFLAMERGSHFSLGCPQLGYAAARAFRLEPLTPRGVLTVDGEQVEYGPLQAQMHPGIGTLLTGPPGCPGREP</sequence>
<feature type="chain" id="PRO_0000181358" description="Sphingosine kinase 2">
    <location>
        <begin position="1"/>
        <end position="654"/>
    </location>
</feature>
<feature type="domain" description="DAGKc" evidence="3">
    <location>
        <begin position="178"/>
        <end position="325"/>
    </location>
</feature>
<feature type="region of interest" description="Required for binding to sulfatide and phosphoinositides and for membrane localizatione" evidence="13">
    <location>
        <begin position="1"/>
        <end position="175"/>
    </location>
</feature>
<feature type="region of interest" description="Disordered" evidence="4">
    <location>
        <begin position="1"/>
        <end position="28"/>
    </location>
</feature>
<feature type="region of interest" description="Disordered" evidence="4">
    <location>
        <begin position="400"/>
        <end position="509"/>
    </location>
</feature>
<feature type="short sequence motif" description="Nuclear localization signal" evidence="1">
    <location>
        <begin position="122"/>
        <end position="130"/>
    </location>
</feature>
<feature type="short sequence motif" description="Nuclear export signal" evidence="10">
    <location>
        <begin position="416"/>
        <end position="425"/>
    </location>
</feature>
<feature type="compositionally biased region" description="Basic and acidic residues" evidence="4">
    <location>
        <begin position="1"/>
        <end position="17"/>
    </location>
</feature>
<feature type="compositionally biased region" description="Gly residues" evidence="4">
    <location>
        <begin position="447"/>
        <end position="461"/>
    </location>
</feature>
<feature type="compositionally biased region" description="Low complexity" evidence="4">
    <location>
        <begin position="462"/>
        <end position="482"/>
    </location>
</feature>
<feature type="active site" description="Proton donor/acceptor" evidence="2">
    <location>
        <position position="247"/>
    </location>
</feature>
<feature type="binding site" evidence="3">
    <location>
        <begin position="188"/>
        <end position="190"/>
    </location>
    <ligand>
        <name>ATP</name>
        <dbReference type="ChEBI" id="CHEBI:30616"/>
    </ligand>
</feature>
<feature type="binding site" evidence="3">
    <location>
        <begin position="220"/>
        <end position="224"/>
    </location>
    <ligand>
        <name>ATP</name>
        <dbReference type="ChEBI" id="CHEBI:30616"/>
    </ligand>
</feature>
<feature type="binding site" evidence="2">
    <location>
        <begin position="245"/>
        <end position="248"/>
    </location>
    <ligand>
        <name>substrate</name>
    </ligand>
</feature>
<feature type="binding site" evidence="3">
    <location>
        <position position="252"/>
    </location>
    <ligand>
        <name>ATP</name>
        <dbReference type="ChEBI" id="CHEBI:30616"/>
    </ligand>
</feature>
<feature type="binding site" evidence="3">
    <location>
        <begin position="277"/>
        <end position="279"/>
    </location>
    <ligand>
        <name>ATP</name>
        <dbReference type="ChEBI" id="CHEBI:30616"/>
    </ligand>
</feature>
<feature type="binding site" evidence="2">
    <location>
        <position position="344"/>
    </location>
    <ligand>
        <name>substrate</name>
    </ligand>
</feature>
<feature type="binding site" evidence="3">
    <location>
        <position position="351"/>
    </location>
    <ligand>
        <name>ATP</name>
        <dbReference type="ChEBI" id="CHEBI:30616"/>
    </ligand>
</feature>
<feature type="binding site" evidence="3">
    <location>
        <position position="357"/>
    </location>
    <ligand>
        <name>ATP</name>
        <dbReference type="ChEBI" id="CHEBI:30616"/>
    </ligand>
</feature>
<feature type="binding site" evidence="3">
    <location>
        <begin position="622"/>
        <end position="624"/>
    </location>
    <ligand>
        <name>ATP</name>
        <dbReference type="ChEBI" id="CHEBI:30616"/>
    </ligand>
</feature>
<feature type="modified residue" description="Phosphoserine; by MAPK" evidence="9 26">
    <location>
        <position position="387"/>
    </location>
</feature>
<feature type="modified residue" description="Phosphoserine" evidence="1">
    <location>
        <position position="393"/>
    </location>
</feature>
<feature type="modified residue" description="Phosphoserine" evidence="26">
    <location>
        <position position="399"/>
    </location>
</feature>
<feature type="modified residue" description="Phosphoserine; by PKD" evidence="10">
    <location>
        <position position="419"/>
    </location>
</feature>
<feature type="modified residue" description="Phosphoserine; by PKD" evidence="10">
    <location>
        <position position="421"/>
    </location>
</feature>
<feature type="modified residue" description="Phosphoserine" evidence="27">
    <location>
        <position position="477"/>
    </location>
</feature>
<feature type="modified residue" description="Phosphothreonine; by MAPK" evidence="9">
    <location>
        <position position="614"/>
    </location>
</feature>
<feature type="splice variant" id="VSP_006217" description="In isoform 2 and isoform 3." evidence="18 19 20 21">
    <location>
        <begin position="1"/>
        <end position="36"/>
    </location>
</feature>
<feature type="splice variant" id="VSP_047721" description="In isoform 5." evidence="23">
    <original>MNGHLEAEEQQD</original>
    <variation>MIGCLHARVSGPLWDAGLCPASSRSAHTCLSLSVSDAPVSPATAPHCLLLSTAPAPPCPCHGVLNSHPFSPPFP</variation>
    <location>
        <begin position="1"/>
        <end position="12"/>
    </location>
</feature>
<feature type="splice variant" id="VSP_046910" description="In isoform 4." evidence="20">
    <location>
        <begin position="13"/>
        <end position="71"/>
    </location>
</feature>
<feature type="splice variant" id="VSP_006218" description="In isoform 3." evidence="20">
    <original>FEPALGLDLLLNCSLLLCRGGGHPLDLLSVTLASGSRCFSFLSVAWGFVSDVDIQSERFRALGSARFTLGTVLGLATLHTYRGRLSYLPATVEPASPTP</original>
    <variation>PREDSDSSTSSSACPLWTTARSCPRAAASMPGSCPLLPQQLALGFSRFIQDRVNGGGGRIGSLTCRGHTQRTLPAPAREGGGSLFLKNINVFICKKKKK</variation>
    <location>
        <begin position="292"/>
        <end position="390"/>
    </location>
</feature>
<feature type="splice variant" id="VSP_047722" description="In isoform 5." evidence="23">
    <original>GTLLTGPPGCPGREP</original>
    <variation>ARGRTQTPALPAAPALYGRQPGAAHGLQPVCQGAALFFHNSWLWGSQDLFRIVLTEAVGG</variation>
    <location>
        <begin position="640"/>
        <end position="654"/>
    </location>
</feature>
<feature type="sequence variant" id="VAR_060112" description="In dbSNP:rs11881285.">
    <original>R</original>
    <variation>Q</variation>
    <location>
        <position position="652"/>
    </location>
</feature>
<feature type="mutagenesis site" description="Abolishes cleavage and secretion in apoptotic cells. No effect on kinase activity." evidence="15">
    <original>D</original>
    <variation>A</variation>
    <location>
        <position position="138"/>
    </location>
</feature>
<feature type="mutagenesis site" description="Decreases SPP production in nucleus. Abolishes increase of histone acetylation. No effect on association with histone 3." evidence="14">
    <original>G</original>
    <variation>E</variation>
    <location>
        <position position="212"/>
    </location>
</feature>
<feature type="mutagenesis site" description="Loss of location to cell membrane. Not secreted. No effect on kinase activity." evidence="15">
    <original>T</original>
    <variation>A</variation>
    <location>
        <position position="220"/>
    </location>
</feature>
<feature type="mutagenesis site" description="Strongly reduces phosphorylation levels." evidence="9">
    <original>S</original>
    <variation>A</variation>
    <location>
        <position position="387"/>
    </location>
</feature>
<feature type="mutagenesis site" description="Abolishes nuclear export in response to PMA treatment." evidence="10">
    <original>SVS</original>
    <variation>AVA</variation>
    <location>
        <begin position="419"/>
        <end position="421"/>
    </location>
</feature>
<feature type="mutagenesis site" description="Abolishes nuclear export." evidence="10">
    <original>LPL</original>
    <variation>APA</variation>
    <location>
        <begin position="423"/>
        <end position="425"/>
    </location>
</feature>
<feature type="mutagenesis site" description="Reduces phosphorylation levels." evidence="9">
    <original>S</original>
    <variation>A</variation>
    <location>
        <position position="437"/>
    </location>
</feature>
<feature type="mutagenesis site" description="Reduces phosphorylation levels." evidence="9">
    <original>S</original>
    <variation>A</variation>
    <location>
        <position position="466"/>
    </location>
</feature>
<feature type="mutagenesis site" description="Reduces phosphorylation levels." evidence="9">
    <original>S</original>
    <variation>A</variation>
    <location>
        <position position="477"/>
    </location>
</feature>
<feature type="mutagenesis site" description="No effect on cleavage and secretion in apoptotic cells. No effect on kinase activity." evidence="15">
    <original>D</original>
    <variation>A</variation>
    <location>
        <position position="552"/>
    </location>
</feature>
<feature type="mutagenesis site" description="Abolishes phosphorylation." evidence="9">
    <original>T</original>
    <variation>A</variation>
    <location>
        <position position="614"/>
    </location>
</feature>
<feature type="sequence conflict" description="In Ref. 3; CAB66636." evidence="24" ref="3">
    <original>P</original>
    <variation>S</variation>
    <location>
        <position position="49"/>
    </location>
</feature>
<protein>
    <recommendedName>
        <fullName evidence="24">Sphingosine kinase 2</fullName>
        <shortName>SK 2</shortName>
        <shortName>SPK 2</shortName>
        <ecNumber evidence="5 6 14">2.7.1.91</ecNumber>
    </recommendedName>
</protein>
<comment type="function">
    <text evidence="1 6 7 8 13 14 16">Catalyzes the phosphorylation of sphingosine to form sphingosine-1-phosphate (SPP), a lipid mediator with both intra- and extracellular functions. Also acts on D-erythro-dihydrosphingosine, D-erythro-sphingosine and L-threo-dihydrosphingosine. Binds phosphoinositides (PubMed:12954646, PubMed:19168031). In contrast to prosurvival SPHK1, has a positive effect on intracellular ceramide levels, inhibits cells growth and enhances apoptosis (PubMed:16118219). In mitochondria, is important for cytochrome-c oxidase assembly and mitochondrial respiration. The SPP produced in mitochondria binds PHB2 and modulates the regulation via PHB2 of complex IV assembly and respiration (PubMed:20959514). In nucleus, plays a role in epigenetic regulation of gene expression. Interacts with HDAC1 and HDAC2 and, through SPP production, inhibits their enzymatic activity, preventing the removal of acetyl groups from lysine residues with histones. Up-regulates acetylation of histone H3-K9, histone H4-K5 and histone H2B-K12 (PubMed:19729656). In nucleus, may have an inhibitory effect on DNA synthesis and cell cycle (PubMed:12954646, PubMed:16103110). In mast cells, is the main regulator of SPP production which mediates calcium influx, NF-kappa-B activation, cytokine production, such as TNF and IL6, and degranulation of mast cells (By similarity). In dopaminergic neurons, is involved in promoting mitochondrial functions regulating ATP and ROS levels (By similarity). Also involved in the regulation of glucose and lipid metabolism (By similarity).</text>
</comment>
<comment type="catalytic activity">
    <reaction evidence="5 6 14">
        <text>a sphingoid base + ATP = a sphingoid 1-phosphate + ADP + H(+)</text>
        <dbReference type="Rhea" id="RHEA:51496"/>
        <dbReference type="ChEBI" id="CHEBI:15378"/>
        <dbReference type="ChEBI" id="CHEBI:30616"/>
        <dbReference type="ChEBI" id="CHEBI:76941"/>
        <dbReference type="ChEBI" id="CHEBI:84410"/>
        <dbReference type="ChEBI" id="CHEBI:456216"/>
        <dbReference type="EC" id="2.7.1.91"/>
    </reaction>
</comment>
<comment type="catalytic activity">
    <reaction evidence="5">
        <text>sphing-4-enine + ATP = sphing-4-enine 1-phosphate + ADP + H(+)</text>
        <dbReference type="Rhea" id="RHEA:35847"/>
        <dbReference type="ChEBI" id="CHEBI:15378"/>
        <dbReference type="ChEBI" id="CHEBI:30616"/>
        <dbReference type="ChEBI" id="CHEBI:57756"/>
        <dbReference type="ChEBI" id="CHEBI:60119"/>
        <dbReference type="ChEBI" id="CHEBI:456216"/>
        <dbReference type="EC" id="2.7.1.91"/>
    </reaction>
    <physiologicalReaction direction="left-to-right" evidence="5">
        <dbReference type="Rhea" id="RHEA:35848"/>
    </physiologicalReaction>
</comment>
<comment type="catalytic activity">
    <reaction evidence="1">
        <text>sphinganine + ATP = sphinganine 1-phosphate + ADP + H(+)</text>
        <dbReference type="Rhea" id="RHEA:15465"/>
        <dbReference type="ChEBI" id="CHEBI:15378"/>
        <dbReference type="ChEBI" id="CHEBI:30616"/>
        <dbReference type="ChEBI" id="CHEBI:57817"/>
        <dbReference type="ChEBI" id="CHEBI:57939"/>
        <dbReference type="ChEBI" id="CHEBI:456216"/>
        <dbReference type="EC" id="2.7.1.91"/>
    </reaction>
</comment>
<comment type="catalytic activity">
    <reaction evidence="1">
        <text>(4R)-hydroxysphinganine + ATP = (4R)-hydroxysphinganine 1-phosphate + ADP + H(+)</text>
        <dbReference type="Rhea" id="RHEA:33563"/>
        <dbReference type="ChEBI" id="CHEBI:15378"/>
        <dbReference type="ChEBI" id="CHEBI:30616"/>
        <dbReference type="ChEBI" id="CHEBI:64124"/>
        <dbReference type="ChEBI" id="CHEBI:64795"/>
        <dbReference type="ChEBI" id="CHEBI:456216"/>
        <dbReference type="EC" id="2.7.1.91"/>
    </reaction>
</comment>
<comment type="cofactor">
    <cofactor evidence="2">
        <name>Mg(2+)</name>
        <dbReference type="ChEBI" id="CHEBI:18420"/>
    </cofactor>
</comment>
<comment type="activity regulation">
    <text evidence="9 13">Inhibited by sulfatide (PubMed:19168031). Kinase activity is increased by phosphorylation by MAPK2 upon PMA or EGF treatments (PubMed:17311928).</text>
</comment>
<comment type="subunit">
    <text evidence="1 12 14">Interacts with histone H3 (PubMed:19729656). Interacts with HDAC1, HDAC2, MBD2 and SIN3A (PubMed:19729656). Interacts with EEF1A1; the interaction enhances SPHK2 kinase activity (PubMed:18263879). Interacts with PHB2 (By similarity).</text>
</comment>
<comment type="interaction">
    <interactant intactId="EBI-985324">
        <id>Q9NRA0</id>
    </interactant>
    <interactant intactId="EBI-748974">
        <id>Q96CV9</id>
        <label>OPTN</label>
    </interactant>
    <organismsDiffer>false</organismsDiffer>
    <experiments>3</experiments>
</comment>
<comment type="subcellular location">
    <subcellularLocation>
        <location evidence="6 7 10 15 17">Cytoplasm</location>
    </subcellularLocation>
    <subcellularLocation>
        <location evidence="6 7 10 14 15 17">Nucleus</location>
    </subcellularLocation>
    <subcellularLocation>
        <location evidence="1">Endoplasmic reticulum</location>
    </subcellularLocation>
    <subcellularLocation>
        <location evidence="1">Mitochondrion inner membrane</location>
    </subcellularLocation>
    <text evidence="14 15 17">In nucleus, located in nucleosomes where it associates with core histone proteins such as histone 3 (PubMed:19729656). In brains of patients with Alzheimer's disease, may be preferentially localized in the nucleus. Cytosolic expression decrease correlates with the density of amyloid deposits (PubMed:29615132). In apoptotic cells, colocalizes with CASP1 in cell membrane where is cleaved and released from cells in an active form (PubMed:20197547).</text>
</comment>
<comment type="subcellular location">
    <molecule>Isoform 2</molecule>
    <subcellularLocation>
        <location evidence="11">Lysosome membrane</location>
    </subcellularLocation>
</comment>
<comment type="alternative products">
    <event type="alternative splicing"/>
    <isoform>
        <id>Q9NRA0-1</id>
        <name>1</name>
        <name>SK2B</name>
        <name evidence="22">SK2-L</name>
        <sequence type="displayed"/>
    </isoform>
    <isoform>
        <id>Q9NRA0-2</id>
        <name>2</name>
        <name>SK2A</name>
        <name evidence="22">SK2-S</name>
        <sequence type="described" ref="VSP_006217"/>
    </isoform>
    <isoform>
        <id>Q9NRA0-3</id>
        <name>3</name>
        <sequence type="described" ref="VSP_006217 VSP_006218"/>
    </isoform>
    <isoform>
        <id>Q9NRA0-4</id>
        <name>4</name>
        <sequence type="described" ref="VSP_046910"/>
    </isoform>
    <isoform>
        <id>Q9NRA0-5</id>
        <name>5</name>
        <sequence type="described" ref="VSP_047721 VSP_047722"/>
    </isoform>
    <text>Experimental confirmation may be lacking for some isoforms.</text>
</comment>
<comment type="tissue specificity">
    <text evidence="5 7 17">Mainly expressed in adult kidney, liver, and brain (PubMed:10751414). Expressed in cerebral cortex and hippocampus (at protein level) (PubMed:29615132). Isoform 1 is the predominant form expressed in most tissues (PubMed:16103110).</text>
</comment>
<comment type="PTM">
    <text evidence="9 10">Phosphorylated by PKD on Ser-419 and Ser-421 upon PMA treatment. Phosphorylation induces export from the nucleus to the cytoplasm (PubMed:17635916). Phosphorylated by MAPK1 and MAPK2 at Ser-387 and Thr-614, phosphorylation is induced by agonists such as EGF and PMA and increases kinase activity (PubMed:17311928).</text>
</comment>
<comment type="PTM">
    <text evidence="15">Cleaved by CASP1 in apoptotic cells. The truncated form is released from cells.</text>
</comment>
<comment type="disease">
    <text evidence="17">In patients with Alzheimer's disease brains, may be preferentially localized in the nucleus. Cytosolic expression decrease correlates with the density of amyloid deposits.</text>
</comment>
<keyword id="KW-0025">Alternative splicing</keyword>
<keyword id="KW-0067">ATP-binding</keyword>
<keyword id="KW-0963">Cytoplasm</keyword>
<keyword id="KW-0256">Endoplasmic reticulum</keyword>
<keyword id="KW-0418">Kinase</keyword>
<keyword id="KW-0443">Lipid metabolism</keyword>
<keyword id="KW-0458">Lysosome</keyword>
<keyword id="KW-0472">Membrane</keyword>
<keyword id="KW-0496">Mitochondrion</keyword>
<keyword id="KW-0999">Mitochondrion inner membrane</keyword>
<keyword id="KW-0547">Nucleotide-binding</keyword>
<keyword id="KW-0539">Nucleus</keyword>
<keyword id="KW-0597">Phosphoprotein</keyword>
<keyword id="KW-1267">Proteomics identification</keyword>
<keyword id="KW-1185">Reference proteome</keyword>
<keyword id="KW-0808">Transferase</keyword>
<organism>
    <name type="scientific">Homo sapiens</name>
    <name type="common">Human</name>
    <dbReference type="NCBI Taxonomy" id="9606"/>
    <lineage>
        <taxon>Eukaryota</taxon>
        <taxon>Metazoa</taxon>
        <taxon>Chordata</taxon>
        <taxon>Craniata</taxon>
        <taxon>Vertebrata</taxon>
        <taxon>Euteleostomi</taxon>
        <taxon>Mammalia</taxon>
        <taxon>Eutheria</taxon>
        <taxon>Euarchontoglires</taxon>
        <taxon>Primates</taxon>
        <taxon>Haplorrhini</taxon>
        <taxon>Catarrhini</taxon>
        <taxon>Hominidae</taxon>
        <taxon>Homo</taxon>
    </lineage>
</organism>
<name>SPHK2_HUMAN</name>
<evidence type="ECO:0000250" key="1">
    <source>
        <dbReference type="UniProtKB" id="Q9JIA7"/>
    </source>
</evidence>
<evidence type="ECO:0000250" key="2">
    <source>
        <dbReference type="UniProtKB" id="Q9NYA1"/>
    </source>
</evidence>
<evidence type="ECO:0000255" key="3">
    <source>
        <dbReference type="PROSITE-ProRule" id="PRU00783"/>
    </source>
</evidence>
<evidence type="ECO:0000256" key="4">
    <source>
        <dbReference type="SAM" id="MobiDB-lite"/>
    </source>
</evidence>
<evidence type="ECO:0000269" key="5">
    <source>
    </source>
</evidence>
<evidence type="ECO:0000269" key="6">
    <source>
    </source>
</evidence>
<evidence type="ECO:0000269" key="7">
    <source>
    </source>
</evidence>
<evidence type="ECO:0000269" key="8">
    <source>
    </source>
</evidence>
<evidence type="ECO:0000269" key="9">
    <source>
    </source>
</evidence>
<evidence type="ECO:0000269" key="10">
    <source>
    </source>
</evidence>
<evidence type="ECO:0000269" key="11">
    <source>
    </source>
</evidence>
<evidence type="ECO:0000269" key="12">
    <source>
    </source>
</evidence>
<evidence type="ECO:0000269" key="13">
    <source>
    </source>
</evidence>
<evidence type="ECO:0000269" key="14">
    <source>
    </source>
</evidence>
<evidence type="ECO:0000269" key="15">
    <source>
    </source>
</evidence>
<evidence type="ECO:0000269" key="16">
    <source>
    </source>
</evidence>
<evidence type="ECO:0000269" key="17">
    <source>
    </source>
</evidence>
<evidence type="ECO:0000303" key="18">
    <source>
    </source>
</evidence>
<evidence type="ECO:0000303" key="19">
    <source>
    </source>
</evidence>
<evidence type="ECO:0000303" key="20">
    <source>
    </source>
</evidence>
<evidence type="ECO:0000303" key="21">
    <source>
    </source>
</evidence>
<evidence type="ECO:0000303" key="22">
    <source>
    </source>
</evidence>
<evidence type="ECO:0000303" key="23">
    <source ref="2"/>
</evidence>
<evidence type="ECO:0000305" key="24"/>
<evidence type="ECO:0000312" key="25">
    <source>
        <dbReference type="HGNC" id="HGNC:18859"/>
    </source>
</evidence>
<evidence type="ECO:0007744" key="26">
    <source>
    </source>
</evidence>
<evidence type="ECO:0007744" key="27">
    <source>
    </source>
</evidence>
<dbReference type="EC" id="2.7.1.91" evidence="5 6 14"/>
<dbReference type="EMBL" id="AF245447">
    <property type="protein sequence ID" value="AAF74124.1"/>
    <property type="molecule type" value="mRNA"/>
</dbReference>
<dbReference type="EMBL" id="EF107108">
    <property type="protein sequence ID" value="ABK81123.1"/>
    <property type="molecule type" value="mRNA"/>
</dbReference>
<dbReference type="EMBL" id="AL136701">
    <property type="protein sequence ID" value="CAB66636.1"/>
    <property type="molecule type" value="mRNA"/>
</dbReference>
<dbReference type="EMBL" id="AK000599">
    <property type="protein sequence ID" value="BAA91280.1"/>
    <property type="molecule type" value="mRNA"/>
</dbReference>
<dbReference type="EMBL" id="AK300541">
    <property type="protein sequence ID" value="BAG62249.1"/>
    <property type="molecule type" value="mRNA"/>
</dbReference>
<dbReference type="EMBL" id="AC022154">
    <property type="status" value="NOT_ANNOTATED_CDS"/>
    <property type="molecule type" value="Genomic_DNA"/>
</dbReference>
<dbReference type="EMBL" id="BC006161">
    <property type="protein sequence ID" value="AAH06161.1"/>
    <property type="molecule type" value="mRNA"/>
</dbReference>
<dbReference type="EMBL" id="BC010671">
    <property type="protein sequence ID" value="AAH10671.1"/>
    <property type="molecule type" value="mRNA"/>
</dbReference>
<dbReference type="CCDS" id="CCDS12727.1">
    <molecule id="Q9NRA0-1"/>
</dbReference>
<dbReference type="CCDS" id="CCDS59404.1">
    <molecule id="Q9NRA0-4"/>
</dbReference>
<dbReference type="CCDS" id="CCDS59405.1">
    <molecule id="Q9NRA0-2"/>
</dbReference>
<dbReference type="RefSeq" id="NP_001191087.1">
    <molecule id="Q9NRA0-4"/>
    <property type="nucleotide sequence ID" value="NM_001204158.3"/>
</dbReference>
<dbReference type="RefSeq" id="NP_001191088.1">
    <molecule id="Q9NRA0-1"/>
    <property type="nucleotide sequence ID" value="NM_001204159.3"/>
</dbReference>
<dbReference type="RefSeq" id="NP_001191089.1">
    <molecule id="Q9NRA0-2"/>
    <property type="nucleotide sequence ID" value="NM_001204160.3"/>
</dbReference>
<dbReference type="RefSeq" id="NP_064511.2">
    <molecule id="Q9NRA0-1"/>
    <property type="nucleotide sequence ID" value="NM_020126.4"/>
</dbReference>
<dbReference type="RefSeq" id="XP_006723355.1">
    <property type="nucleotide sequence ID" value="XM_006723292.1"/>
</dbReference>
<dbReference type="RefSeq" id="XP_011525435.1">
    <property type="nucleotide sequence ID" value="XM_011527133.1"/>
</dbReference>
<dbReference type="RefSeq" id="XP_011525436.1">
    <property type="nucleotide sequence ID" value="XM_011527134.1"/>
</dbReference>
<dbReference type="SMR" id="Q9NRA0"/>
<dbReference type="BioGRID" id="121208">
    <property type="interactions" value="22"/>
</dbReference>
<dbReference type="FunCoup" id="Q9NRA0">
    <property type="interactions" value="3003"/>
</dbReference>
<dbReference type="IntAct" id="Q9NRA0">
    <property type="interactions" value="11"/>
</dbReference>
<dbReference type="STRING" id="9606.ENSP00000469158"/>
<dbReference type="BindingDB" id="Q9NRA0"/>
<dbReference type="ChEMBL" id="CHEMBL3023"/>
<dbReference type="DrugBank" id="DB12764">
    <property type="generic name" value="Opaganib"/>
</dbReference>
<dbReference type="GuidetoPHARMACOLOGY" id="2205"/>
<dbReference type="SwissLipids" id="SLP:000000112"/>
<dbReference type="GlyGen" id="Q9NRA0">
    <property type="glycosylation" value="2 sites"/>
</dbReference>
<dbReference type="iPTMnet" id="Q9NRA0"/>
<dbReference type="PhosphoSitePlus" id="Q9NRA0"/>
<dbReference type="SwissPalm" id="Q9NRA0"/>
<dbReference type="BioMuta" id="SPHK2"/>
<dbReference type="DMDM" id="22001996"/>
<dbReference type="jPOST" id="Q9NRA0"/>
<dbReference type="MassIVE" id="Q9NRA0"/>
<dbReference type="PaxDb" id="9606-ENSP00000245222"/>
<dbReference type="PeptideAtlas" id="Q9NRA0"/>
<dbReference type="ProteomicsDB" id="82315">
    <molecule id="Q9NRA0-1"/>
</dbReference>
<dbReference type="ProteomicsDB" id="82316">
    <molecule id="Q9NRA0-2"/>
</dbReference>
<dbReference type="ProteomicsDB" id="82317">
    <molecule id="Q9NRA0-3"/>
</dbReference>
<dbReference type="ProteomicsDB" id="86"/>
<dbReference type="Pumba" id="Q9NRA0"/>
<dbReference type="Antibodypedia" id="31745">
    <property type="antibodies" value="448 antibodies from 37 providers"/>
</dbReference>
<dbReference type="DNASU" id="56848"/>
<dbReference type="Ensembl" id="ENST00000245222.9">
    <molecule id="Q9NRA0-1"/>
    <property type="protein sequence ID" value="ENSP00000245222.3"/>
    <property type="gene ID" value="ENSG00000063176.16"/>
</dbReference>
<dbReference type="Ensembl" id="ENST00000598088.5">
    <molecule id="Q9NRA0-1"/>
    <property type="protein sequence ID" value="ENSP00000469158.1"/>
    <property type="gene ID" value="ENSG00000063176.16"/>
</dbReference>
<dbReference type="Ensembl" id="ENST00000599748.5">
    <molecule id="Q9NRA0-2"/>
    <property type="protein sequence ID" value="ENSP00000471205.1"/>
    <property type="gene ID" value="ENSG00000063176.16"/>
</dbReference>
<dbReference type="Ensembl" id="ENST00000600537.5">
    <molecule id="Q9NRA0-4"/>
    <property type="protein sequence ID" value="ENSP00000470092.1"/>
    <property type="gene ID" value="ENSG00000063176.16"/>
</dbReference>
<dbReference type="GeneID" id="56848"/>
<dbReference type="KEGG" id="hsa:56848"/>
<dbReference type="MANE-Select" id="ENST00000245222.9">
    <property type="protein sequence ID" value="ENSP00000245222.3"/>
    <property type="RefSeq nucleotide sequence ID" value="NM_020126.5"/>
    <property type="RefSeq protein sequence ID" value="NP_064511.2"/>
</dbReference>
<dbReference type="UCSC" id="uc002pjr.4">
    <molecule id="Q9NRA0-1"/>
    <property type="organism name" value="human"/>
</dbReference>
<dbReference type="AGR" id="HGNC:18859"/>
<dbReference type="CTD" id="56848"/>
<dbReference type="DisGeNET" id="56848"/>
<dbReference type="GeneCards" id="SPHK2"/>
<dbReference type="HGNC" id="HGNC:18859">
    <property type="gene designation" value="SPHK2"/>
</dbReference>
<dbReference type="HPA" id="ENSG00000063176">
    <property type="expression patterns" value="Low tissue specificity"/>
</dbReference>
<dbReference type="MIM" id="607092">
    <property type="type" value="gene"/>
</dbReference>
<dbReference type="neXtProt" id="NX_Q9NRA0"/>
<dbReference type="OpenTargets" id="ENSG00000063176"/>
<dbReference type="PharmGKB" id="PA38719"/>
<dbReference type="VEuPathDB" id="HostDB:ENSG00000063176"/>
<dbReference type="eggNOG" id="KOG1116">
    <property type="taxonomic scope" value="Eukaryota"/>
</dbReference>
<dbReference type="GeneTree" id="ENSGT00940000161197"/>
<dbReference type="HOGENOM" id="CLU_013399_1_1_1"/>
<dbReference type="InParanoid" id="Q9NRA0"/>
<dbReference type="OMA" id="KHYVMYS"/>
<dbReference type="OrthoDB" id="3853857at2759"/>
<dbReference type="PAN-GO" id="Q9NRA0">
    <property type="GO annotations" value="9 GO annotations based on evolutionary models"/>
</dbReference>
<dbReference type="PhylomeDB" id="Q9NRA0"/>
<dbReference type="TreeFam" id="TF354296"/>
<dbReference type="BRENDA" id="2.7.1.91">
    <property type="organism ID" value="2681"/>
</dbReference>
<dbReference type="PathwayCommons" id="Q9NRA0"/>
<dbReference type="Reactome" id="R-HSA-1660661">
    <property type="pathway name" value="Sphingolipid de novo biosynthesis"/>
</dbReference>
<dbReference type="SignaLink" id="Q9NRA0"/>
<dbReference type="SIGNOR" id="Q9NRA0"/>
<dbReference type="BioGRID-ORCS" id="56848">
    <property type="hits" value="27 hits in 1164 CRISPR screens"/>
</dbReference>
<dbReference type="CD-CODE" id="8C2F96ED">
    <property type="entry name" value="Centrosome"/>
</dbReference>
<dbReference type="ChiTaRS" id="SPHK2">
    <property type="organism name" value="human"/>
</dbReference>
<dbReference type="GeneWiki" id="SPHK2"/>
<dbReference type="GenomeRNAi" id="56848"/>
<dbReference type="Pharos" id="Q9NRA0">
    <property type="development level" value="Tchem"/>
</dbReference>
<dbReference type="PRO" id="PR:Q9NRA0"/>
<dbReference type="Proteomes" id="UP000005640">
    <property type="component" value="Chromosome 19"/>
</dbReference>
<dbReference type="RNAct" id="Q9NRA0">
    <property type="molecule type" value="protein"/>
</dbReference>
<dbReference type="Bgee" id="ENSG00000063176">
    <property type="expression patterns" value="Expressed in mucosa of transverse colon and 145 other cell types or tissues"/>
</dbReference>
<dbReference type="ExpressionAtlas" id="Q9NRA0">
    <property type="expression patterns" value="baseline and differential"/>
</dbReference>
<dbReference type="GO" id="GO:0005737">
    <property type="term" value="C:cytoplasm"/>
    <property type="evidence" value="ECO:0000314"/>
    <property type="project" value="UniProtKB"/>
</dbReference>
<dbReference type="GO" id="GO:0005829">
    <property type="term" value="C:cytosol"/>
    <property type="evidence" value="ECO:0000314"/>
    <property type="project" value="UniProtKB"/>
</dbReference>
<dbReference type="GO" id="GO:0005783">
    <property type="term" value="C:endoplasmic reticulum"/>
    <property type="evidence" value="ECO:0000250"/>
    <property type="project" value="UniProtKB"/>
</dbReference>
<dbReference type="GO" id="GO:0043231">
    <property type="term" value="C:intracellular membrane-bounded organelle"/>
    <property type="evidence" value="ECO:0000318"/>
    <property type="project" value="GO_Central"/>
</dbReference>
<dbReference type="GO" id="GO:0005765">
    <property type="term" value="C:lysosomal membrane"/>
    <property type="evidence" value="ECO:0007005"/>
    <property type="project" value="UniProtKB"/>
</dbReference>
<dbReference type="GO" id="GO:0016020">
    <property type="term" value="C:membrane"/>
    <property type="evidence" value="ECO:0000314"/>
    <property type="project" value="UniProtKB"/>
</dbReference>
<dbReference type="GO" id="GO:0005743">
    <property type="term" value="C:mitochondrial inner membrane"/>
    <property type="evidence" value="ECO:0007669"/>
    <property type="project" value="UniProtKB-SubCell"/>
</dbReference>
<dbReference type="GO" id="GO:0005739">
    <property type="term" value="C:mitochondrion"/>
    <property type="evidence" value="ECO:0000250"/>
    <property type="project" value="UniProtKB"/>
</dbReference>
<dbReference type="GO" id="GO:0005654">
    <property type="term" value="C:nucleoplasm"/>
    <property type="evidence" value="ECO:0000314"/>
    <property type="project" value="HPA"/>
</dbReference>
<dbReference type="GO" id="GO:0000786">
    <property type="term" value="C:nucleosome"/>
    <property type="evidence" value="ECO:0000314"/>
    <property type="project" value="UniProtKB"/>
</dbReference>
<dbReference type="GO" id="GO:0005634">
    <property type="term" value="C:nucleus"/>
    <property type="evidence" value="ECO:0000314"/>
    <property type="project" value="UniProtKB"/>
</dbReference>
<dbReference type="GO" id="GO:0005524">
    <property type="term" value="F:ATP binding"/>
    <property type="evidence" value="ECO:0007669"/>
    <property type="project" value="UniProtKB-KW"/>
</dbReference>
<dbReference type="GO" id="GO:0017050">
    <property type="term" value="F:D-erythro-sphingosine kinase activity"/>
    <property type="evidence" value="ECO:0000314"/>
    <property type="project" value="UniProtKB"/>
</dbReference>
<dbReference type="GO" id="GO:0042393">
    <property type="term" value="F:histone binding"/>
    <property type="evidence" value="ECO:0000314"/>
    <property type="project" value="GO_Central"/>
</dbReference>
<dbReference type="GO" id="GO:0001727">
    <property type="term" value="F:lipid kinase activity"/>
    <property type="evidence" value="ECO:0000304"/>
    <property type="project" value="Reactome"/>
</dbReference>
<dbReference type="GO" id="GO:0031267">
    <property type="term" value="F:small GTPase binding"/>
    <property type="evidence" value="ECO:0000303"/>
    <property type="project" value="UniProtKB"/>
</dbReference>
<dbReference type="GO" id="GO:0008481">
    <property type="term" value="F:sphingosine kinase activity"/>
    <property type="evidence" value="ECO:0000314"/>
    <property type="project" value="UniProtKB"/>
</dbReference>
<dbReference type="GO" id="GO:0038036">
    <property type="term" value="F:sphingosine-1-phosphate receptor activity"/>
    <property type="evidence" value="ECO:0000315"/>
    <property type="project" value="UniProtKB"/>
</dbReference>
<dbReference type="GO" id="GO:0001568">
    <property type="term" value="P:blood vessel development"/>
    <property type="evidence" value="ECO:0007669"/>
    <property type="project" value="Ensembl"/>
</dbReference>
<dbReference type="GO" id="GO:0007420">
    <property type="term" value="P:brain development"/>
    <property type="evidence" value="ECO:0007669"/>
    <property type="project" value="Ensembl"/>
</dbReference>
<dbReference type="GO" id="GO:0008283">
    <property type="term" value="P:cell population proliferation"/>
    <property type="evidence" value="ECO:0007669"/>
    <property type="project" value="Ensembl"/>
</dbReference>
<dbReference type="GO" id="GO:1904628">
    <property type="term" value="P:cellular response to phorbol 13-acetate 12-myristate"/>
    <property type="evidence" value="ECO:0000314"/>
    <property type="project" value="UniProtKB"/>
</dbReference>
<dbReference type="GO" id="GO:0007565">
    <property type="term" value="P:female pregnancy"/>
    <property type="evidence" value="ECO:0007669"/>
    <property type="project" value="Ensembl"/>
</dbReference>
<dbReference type="GO" id="GO:0035556">
    <property type="term" value="P:intracellular signal transduction"/>
    <property type="evidence" value="ECO:0000250"/>
    <property type="project" value="UniProtKB"/>
</dbReference>
<dbReference type="GO" id="GO:0030308">
    <property type="term" value="P:negative regulation of cell growth"/>
    <property type="evidence" value="ECO:0000250"/>
    <property type="project" value="UniProtKB"/>
</dbReference>
<dbReference type="GO" id="GO:0043065">
    <property type="term" value="P:positive regulation of apoptotic process"/>
    <property type="evidence" value="ECO:0000314"/>
    <property type="project" value="UniProtKB"/>
</dbReference>
<dbReference type="GO" id="GO:0008284">
    <property type="term" value="P:positive regulation of cell population proliferation"/>
    <property type="evidence" value="ECO:0007669"/>
    <property type="project" value="Ensembl"/>
</dbReference>
<dbReference type="GO" id="GO:2000304">
    <property type="term" value="P:positive regulation of ceramide biosynthetic process"/>
    <property type="evidence" value="ECO:0000314"/>
    <property type="project" value="UniProtKB"/>
</dbReference>
<dbReference type="GO" id="GO:0002720">
    <property type="term" value="P:positive regulation of cytokine production involved in immune response"/>
    <property type="evidence" value="ECO:0000250"/>
    <property type="project" value="UniProtKB"/>
</dbReference>
<dbReference type="GO" id="GO:0032736">
    <property type="term" value="P:positive regulation of interleukin-13 production"/>
    <property type="evidence" value="ECO:0000250"/>
    <property type="project" value="UniProtKB"/>
</dbReference>
<dbReference type="GO" id="GO:0032755">
    <property type="term" value="P:positive regulation of interleukin-6 production"/>
    <property type="evidence" value="ECO:0000250"/>
    <property type="project" value="UniProtKB"/>
</dbReference>
<dbReference type="GO" id="GO:0033008">
    <property type="term" value="P:positive regulation of mast cell activation involved in immune response"/>
    <property type="evidence" value="ECO:0000250"/>
    <property type="project" value="UniProtKB"/>
</dbReference>
<dbReference type="GO" id="GO:0043306">
    <property type="term" value="P:positive regulation of mast cell degranulation"/>
    <property type="evidence" value="ECO:0000250"/>
    <property type="project" value="UniProtKB"/>
</dbReference>
<dbReference type="GO" id="GO:0032760">
    <property type="term" value="P:positive regulation of tumor necrosis factor production"/>
    <property type="evidence" value="ECO:0000250"/>
    <property type="project" value="UniProtKB"/>
</dbReference>
<dbReference type="GO" id="GO:2001169">
    <property type="term" value="P:regulation of ATP biosynthetic process"/>
    <property type="evidence" value="ECO:0000250"/>
    <property type="project" value="UniProtKB"/>
</dbReference>
<dbReference type="GO" id="GO:0043122">
    <property type="term" value="P:regulation of canonical NF-kappaB signal transduction"/>
    <property type="evidence" value="ECO:0000250"/>
    <property type="project" value="UniProtKB"/>
</dbReference>
<dbReference type="GO" id="GO:1904959">
    <property type="term" value="P:regulation of cytochrome-c oxidase activity"/>
    <property type="evidence" value="ECO:0000315"/>
    <property type="project" value="UniProtKB"/>
</dbReference>
<dbReference type="GO" id="GO:1903426">
    <property type="term" value="P:regulation of reactive oxygen species biosynthetic process"/>
    <property type="evidence" value="ECO:0000250"/>
    <property type="project" value="UniProtKB"/>
</dbReference>
<dbReference type="GO" id="GO:0006669">
    <property type="term" value="P:sphinganine-1-phosphate biosynthetic process"/>
    <property type="evidence" value="ECO:0000314"/>
    <property type="project" value="UniProtKB"/>
</dbReference>
<dbReference type="GO" id="GO:0030148">
    <property type="term" value="P:sphingolipid biosynthetic process"/>
    <property type="evidence" value="ECO:0000304"/>
    <property type="project" value="Reactome"/>
</dbReference>
<dbReference type="GO" id="GO:0046512">
    <property type="term" value="P:sphingosine biosynthetic process"/>
    <property type="evidence" value="ECO:0000315"/>
    <property type="project" value="UniProtKB"/>
</dbReference>
<dbReference type="GO" id="GO:0006670">
    <property type="term" value="P:sphingosine metabolic process"/>
    <property type="evidence" value="ECO:0000250"/>
    <property type="project" value="UniProtKB"/>
</dbReference>
<dbReference type="GO" id="GO:0045815">
    <property type="term" value="P:transcription initiation-coupled chromatin remodeling"/>
    <property type="evidence" value="ECO:0000314"/>
    <property type="project" value="UniProtKB"/>
</dbReference>
<dbReference type="FunFam" id="3.40.50.10330:FF:000005">
    <property type="entry name" value="Sphingosine kinase 2"/>
    <property type="match status" value="1"/>
</dbReference>
<dbReference type="Gene3D" id="2.60.200.40">
    <property type="match status" value="1"/>
</dbReference>
<dbReference type="Gene3D" id="3.40.50.10330">
    <property type="entry name" value="Probable inorganic polyphosphate/atp-NAD kinase, domain 1"/>
    <property type="match status" value="1"/>
</dbReference>
<dbReference type="InterPro" id="IPR017438">
    <property type="entry name" value="ATP-NAD_kinase_N"/>
</dbReference>
<dbReference type="InterPro" id="IPR001206">
    <property type="entry name" value="Diacylglycerol_kinase_cat_dom"/>
</dbReference>
<dbReference type="InterPro" id="IPR050187">
    <property type="entry name" value="Lipid_Phosphate_FormReg"/>
</dbReference>
<dbReference type="InterPro" id="IPR016064">
    <property type="entry name" value="NAD/diacylglycerol_kinase_sf"/>
</dbReference>
<dbReference type="InterPro" id="IPR045540">
    <property type="entry name" value="YegS/DAGK_C"/>
</dbReference>
<dbReference type="PANTHER" id="PTHR12358">
    <property type="entry name" value="SPHINGOSINE KINASE"/>
    <property type="match status" value="1"/>
</dbReference>
<dbReference type="PANTHER" id="PTHR12358:SF40">
    <property type="entry name" value="SPHINGOSINE KINASE 2"/>
    <property type="match status" value="1"/>
</dbReference>
<dbReference type="Pfam" id="PF00781">
    <property type="entry name" value="DAGK_cat"/>
    <property type="match status" value="1"/>
</dbReference>
<dbReference type="Pfam" id="PF19279">
    <property type="entry name" value="YegS_C"/>
    <property type="match status" value="1"/>
</dbReference>
<dbReference type="SMART" id="SM00046">
    <property type="entry name" value="DAGKc"/>
    <property type="match status" value="1"/>
</dbReference>
<dbReference type="SUPFAM" id="SSF111331">
    <property type="entry name" value="NAD kinase/diacylglycerol kinase-like"/>
    <property type="match status" value="1"/>
</dbReference>
<dbReference type="PROSITE" id="PS50146">
    <property type="entry name" value="DAGK"/>
    <property type="match status" value="1"/>
</dbReference>